<gene>
    <name evidence="4" type="primary">lreB</name>
    <name type="ORF">BDV35DRAFT_379091</name>
</gene>
<feature type="chain" id="PRO_0000462350" description="Blue light receptor lreB">
    <location>
        <begin position="1"/>
        <end position="507"/>
    </location>
</feature>
<feature type="domain" description="PAS" evidence="2">
    <location>
        <begin position="170"/>
        <end position="234"/>
    </location>
</feature>
<feature type="zinc finger region" description="GATA-type" evidence="1">
    <location>
        <begin position="463"/>
        <end position="488"/>
    </location>
</feature>
<sequence>MIAARHYRKWWLSHIWPKDFSWLVPIESSSVPGPPECPALDEKFQSCQTVDNISLARRVGPPALLYSTGIDSSIAALVARVSCIPTGGHSSCPREYFLSAKTSLVSLVPTMDWTAAEHESGVTQNHQHRMQTEDHDSFAGEIQKLPSPPAGNTGGQNPSDPADEQGWPQRVLNEMKDMLLLLSSDGKILYASPSCKSITGYDANQLQQNALERFIHNDDKTTFAEEMNECITTTRPVHCHFRFRKKDNSSNTSCLLEAHGHPHMKTSEPNDSPENHNEDCIGVFLLCRPYPTRGSQLLDSFLEHKIENVRLNQRIAQLREEEEEDLASGQQLYAGDSTGDSGFRHNSHSGRSNSNQSSFRDTTGSGEENESSDTLTNDDPDSRSYLENAADELGQTEDMSHIEGIEMLTGLHYGDGERSQGLSTGVRQGRLIRYDMESAKLDQQARVIQDSDRKKRQKGEYMCTDCGTSDSPEWRKGPEGPKTLCNACGCKSAVQYTLFSYSSEMSS</sequence>
<accession>A0A5N6H279</accession>
<comment type="function">
    <text evidence="3 5">Probable transcription factor involved in light regulation (Probable). Plays crucial roles in fungal growth and asexual development (PubMed:39947678). Involved in conidiophore formation, sclerotium production, and conidial stress tolerance (PubMed:39947678). Positively regulates the fungal pathogenicity towards maize and aflatoxin B1 production (PubMed:39947678).</text>
</comment>
<comment type="induction">
    <text evidence="3">Highly expressed in conidia.</text>
</comment>
<comment type="disruption phenotype">
    <text evidence="3">Reduces the conidial production under both light and dark conditions (PubMed:39947678). Increases sensitivity of conidia against thermal and oxidative stresses (PubMed:39947678). Decreases aflatoxin B1 production (PubMed:39947678).</text>
</comment>
<proteinExistence type="evidence at transcript level"/>
<evidence type="ECO:0000255" key="1">
    <source>
        <dbReference type="PROSITE-ProRule" id="PRU00094"/>
    </source>
</evidence>
<evidence type="ECO:0000255" key="2">
    <source>
        <dbReference type="PROSITE-ProRule" id="PRU00140"/>
    </source>
</evidence>
<evidence type="ECO:0000269" key="3">
    <source>
    </source>
</evidence>
<evidence type="ECO:0000303" key="4">
    <source>
    </source>
</evidence>
<evidence type="ECO:0000305" key="5">
    <source>
    </source>
</evidence>
<organism>
    <name type="scientific">Aspergillus flavus</name>
    <dbReference type="NCBI Taxonomy" id="5059"/>
    <lineage>
        <taxon>Eukaryota</taxon>
        <taxon>Fungi</taxon>
        <taxon>Dikarya</taxon>
        <taxon>Ascomycota</taxon>
        <taxon>Pezizomycotina</taxon>
        <taxon>Eurotiomycetes</taxon>
        <taxon>Eurotiomycetidae</taxon>
        <taxon>Eurotiales</taxon>
        <taxon>Aspergillaceae</taxon>
        <taxon>Aspergillus</taxon>
        <taxon>Aspergillus subgen. Circumdati</taxon>
    </lineage>
</organism>
<protein>
    <recommendedName>
        <fullName evidence="4">Blue light receptor lreB</fullName>
    </recommendedName>
</protein>
<dbReference type="EMBL" id="ML734581">
    <property type="protein sequence ID" value="KAB8248237.1"/>
    <property type="molecule type" value="Genomic_DNA"/>
</dbReference>
<dbReference type="VEuPathDB" id="FungiDB:AFLA_011062"/>
<dbReference type="VEuPathDB" id="FungiDB:F9C07_2228791"/>
<dbReference type="Proteomes" id="UP000325434">
    <property type="component" value="Unassembled WGS sequence"/>
</dbReference>
<dbReference type="GO" id="GO:0005634">
    <property type="term" value="C:nucleus"/>
    <property type="evidence" value="ECO:0007669"/>
    <property type="project" value="UniProtKB-SubCell"/>
</dbReference>
<dbReference type="GO" id="GO:0043565">
    <property type="term" value="F:sequence-specific DNA binding"/>
    <property type="evidence" value="ECO:0007669"/>
    <property type="project" value="InterPro"/>
</dbReference>
<dbReference type="GO" id="GO:0008270">
    <property type="term" value="F:zinc ion binding"/>
    <property type="evidence" value="ECO:0007669"/>
    <property type="project" value="UniProtKB-KW"/>
</dbReference>
<dbReference type="GO" id="GO:0006355">
    <property type="term" value="P:regulation of DNA-templated transcription"/>
    <property type="evidence" value="ECO:0007669"/>
    <property type="project" value="InterPro"/>
</dbReference>
<dbReference type="CDD" id="cd00130">
    <property type="entry name" value="PAS"/>
    <property type="match status" value="1"/>
</dbReference>
<dbReference type="CDD" id="cd00202">
    <property type="entry name" value="ZnF_GATA"/>
    <property type="match status" value="1"/>
</dbReference>
<dbReference type="Gene3D" id="3.30.50.10">
    <property type="entry name" value="Erythroid Transcription Factor GATA-1, subunit A"/>
    <property type="match status" value="1"/>
</dbReference>
<dbReference type="Gene3D" id="3.30.450.20">
    <property type="entry name" value="PAS domain"/>
    <property type="match status" value="1"/>
</dbReference>
<dbReference type="InterPro" id="IPR000014">
    <property type="entry name" value="PAS"/>
</dbReference>
<dbReference type="InterPro" id="IPR035965">
    <property type="entry name" value="PAS-like_dom_sf"/>
</dbReference>
<dbReference type="InterPro" id="IPR013655">
    <property type="entry name" value="PAS_fold_3"/>
</dbReference>
<dbReference type="InterPro" id="IPR000679">
    <property type="entry name" value="Znf_GATA"/>
</dbReference>
<dbReference type="InterPro" id="IPR013088">
    <property type="entry name" value="Znf_NHR/GATA"/>
</dbReference>
<dbReference type="NCBIfam" id="TIGR00229">
    <property type="entry name" value="sensory_box"/>
    <property type="match status" value="1"/>
</dbReference>
<dbReference type="PANTHER" id="PTHR47172:SF24">
    <property type="entry name" value="GATA ZINC FINGER DOMAIN-CONTAINING PROTEIN 14-RELATED"/>
    <property type="match status" value="1"/>
</dbReference>
<dbReference type="PANTHER" id="PTHR47172">
    <property type="entry name" value="OS01G0976800 PROTEIN"/>
    <property type="match status" value="1"/>
</dbReference>
<dbReference type="Pfam" id="PF00320">
    <property type="entry name" value="GATA"/>
    <property type="match status" value="1"/>
</dbReference>
<dbReference type="Pfam" id="PF08447">
    <property type="entry name" value="PAS_3"/>
    <property type="match status" value="1"/>
</dbReference>
<dbReference type="SMART" id="SM00091">
    <property type="entry name" value="PAS"/>
    <property type="match status" value="1"/>
</dbReference>
<dbReference type="SMART" id="SM00401">
    <property type="entry name" value="ZnF_GATA"/>
    <property type="match status" value="1"/>
</dbReference>
<dbReference type="SUPFAM" id="SSF57716">
    <property type="entry name" value="Glucocorticoid receptor-like (DNA-binding domain)"/>
    <property type="match status" value="1"/>
</dbReference>
<dbReference type="SUPFAM" id="SSF55785">
    <property type="entry name" value="PYP-like sensor domain (PAS domain)"/>
    <property type="match status" value="1"/>
</dbReference>
<dbReference type="PROSITE" id="PS00344">
    <property type="entry name" value="GATA_ZN_FINGER_1"/>
    <property type="match status" value="1"/>
</dbReference>
<dbReference type="PROSITE" id="PS50114">
    <property type="entry name" value="GATA_ZN_FINGER_2"/>
    <property type="match status" value="1"/>
</dbReference>
<dbReference type="PROSITE" id="PS50112">
    <property type="entry name" value="PAS"/>
    <property type="match status" value="1"/>
</dbReference>
<name>LREB_ASPFL</name>
<reference key="1">
    <citation type="submission" date="2019-04" db="EMBL/GenBank/DDBJ databases">
        <title>Friends and foes A comparative genomics study of 23 Aspergillus species from section Flavi.</title>
        <authorList>
            <consortium name="DOE Joint Genome Institute"/>
            <person name="Kjaerbolling I."/>
            <person name="Vesth T."/>
            <person name="Frisvad J.C."/>
            <person name="Nybo J.L."/>
            <person name="Theobald S."/>
            <person name="Kildgaard S."/>
            <person name="Isbrandt T."/>
            <person name="Kuo A."/>
            <person name="Sato A."/>
            <person name="Lyhne E.K."/>
            <person name="Kogle M.E."/>
            <person name="Wiebenga A."/>
            <person name="Kun R.S."/>
            <person name="Lubbers R.J."/>
            <person name="Makela M.R."/>
            <person name="Barry K."/>
            <person name="Chovatia M."/>
            <person name="Clum A."/>
            <person name="Daum C."/>
            <person name="Haridas S."/>
            <person name="He G."/>
            <person name="LaButti K."/>
            <person name="Lipzen A."/>
            <person name="Mondo S."/>
            <person name="Riley R."/>
            <person name="Salamov A."/>
            <person name="Simmons B.A."/>
            <person name="Magnuson J.K."/>
            <person name="Henrissat B."/>
            <person name="Mortensen U.H."/>
            <person name="Larsen T.O."/>
            <person name="Devries R.P."/>
            <person name="Grigoriev I.V."/>
            <person name="Machida M."/>
            <person name="Baker S.E."/>
            <person name="Andersen M.R."/>
        </authorList>
    </citation>
    <scope>NUCLEOTIDE SEQUENCE [LARGE SCALE GENOMIC DNA]</scope>
    <source>
        <strain>CBS 121.62</strain>
    </source>
</reference>
<reference key="2">
    <citation type="journal article" date="2025" name="J. Microbiol. Biotechnol.">
        <title>Characterization of Blue Light Receptors LreA and LreB in Aspergillus flavus.</title>
        <authorList>
            <person name="Park H.M."/>
            <person name="Son Y.E."/>
            <person name="Cho H.J."/>
            <person name="Yu J.H."/>
            <person name="Park H.S."/>
        </authorList>
    </citation>
    <scope>FUNCTION</scope>
    <scope>DISRUPTION PHENOTYPE</scope>
    <scope>INDUCTION</scope>
</reference>
<keyword id="KW-0479">Metal-binding</keyword>
<keyword id="KW-0804">Transcription</keyword>
<keyword id="KW-0805">Transcription regulation</keyword>
<keyword id="KW-0843">Virulence</keyword>
<keyword id="KW-0862">Zinc</keyword>
<keyword id="KW-0863">Zinc-finger</keyword>